<dbReference type="EMBL" id="CP000749">
    <property type="protein sequence ID" value="ABR73180.1"/>
    <property type="molecule type" value="Genomic_DNA"/>
</dbReference>
<dbReference type="STRING" id="400668.Mmwyl1_4285"/>
<dbReference type="KEGG" id="mmw:Mmwyl1_4285"/>
<dbReference type="eggNOG" id="COG0244">
    <property type="taxonomic scope" value="Bacteria"/>
</dbReference>
<dbReference type="HOGENOM" id="CLU_092227_0_2_6"/>
<dbReference type="OrthoDB" id="9808307at2"/>
<dbReference type="GO" id="GO:0015934">
    <property type="term" value="C:large ribosomal subunit"/>
    <property type="evidence" value="ECO:0007669"/>
    <property type="project" value="InterPro"/>
</dbReference>
<dbReference type="GO" id="GO:0070180">
    <property type="term" value="F:large ribosomal subunit rRNA binding"/>
    <property type="evidence" value="ECO:0007669"/>
    <property type="project" value="UniProtKB-UniRule"/>
</dbReference>
<dbReference type="GO" id="GO:0003735">
    <property type="term" value="F:structural constituent of ribosome"/>
    <property type="evidence" value="ECO:0007669"/>
    <property type="project" value="InterPro"/>
</dbReference>
<dbReference type="GO" id="GO:0006412">
    <property type="term" value="P:translation"/>
    <property type="evidence" value="ECO:0007669"/>
    <property type="project" value="UniProtKB-UniRule"/>
</dbReference>
<dbReference type="CDD" id="cd05797">
    <property type="entry name" value="Ribosomal_L10"/>
    <property type="match status" value="1"/>
</dbReference>
<dbReference type="FunFam" id="3.30.70.1730:FF:000001">
    <property type="entry name" value="50S ribosomal protein L10"/>
    <property type="match status" value="1"/>
</dbReference>
<dbReference type="Gene3D" id="3.30.70.1730">
    <property type="match status" value="1"/>
</dbReference>
<dbReference type="Gene3D" id="6.10.250.2350">
    <property type="match status" value="1"/>
</dbReference>
<dbReference type="HAMAP" id="MF_00362">
    <property type="entry name" value="Ribosomal_uL10"/>
    <property type="match status" value="1"/>
</dbReference>
<dbReference type="InterPro" id="IPR001790">
    <property type="entry name" value="Ribosomal_uL10"/>
</dbReference>
<dbReference type="InterPro" id="IPR043141">
    <property type="entry name" value="Ribosomal_uL10-like_sf"/>
</dbReference>
<dbReference type="InterPro" id="IPR022973">
    <property type="entry name" value="Ribosomal_uL10_bac"/>
</dbReference>
<dbReference type="InterPro" id="IPR047865">
    <property type="entry name" value="Ribosomal_uL10_bac_type"/>
</dbReference>
<dbReference type="InterPro" id="IPR002363">
    <property type="entry name" value="Ribosomal_uL10_CS_bac"/>
</dbReference>
<dbReference type="NCBIfam" id="NF000955">
    <property type="entry name" value="PRK00099.1-1"/>
    <property type="match status" value="1"/>
</dbReference>
<dbReference type="PANTHER" id="PTHR11560">
    <property type="entry name" value="39S RIBOSOMAL PROTEIN L10, MITOCHONDRIAL"/>
    <property type="match status" value="1"/>
</dbReference>
<dbReference type="Pfam" id="PF00466">
    <property type="entry name" value="Ribosomal_L10"/>
    <property type="match status" value="1"/>
</dbReference>
<dbReference type="SUPFAM" id="SSF160369">
    <property type="entry name" value="Ribosomal protein L10-like"/>
    <property type="match status" value="1"/>
</dbReference>
<dbReference type="PROSITE" id="PS01109">
    <property type="entry name" value="RIBOSOMAL_L10"/>
    <property type="match status" value="1"/>
</dbReference>
<keyword id="KW-0687">Ribonucleoprotein</keyword>
<keyword id="KW-0689">Ribosomal protein</keyword>
<keyword id="KW-0694">RNA-binding</keyword>
<keyword id="KW-0699">rRNA-binding</keyword>
<feature type="chain" id="PRO_1000079548" description="Large ribosomal subunit protein uL10">
    <location>
        <begin position="1"/>
        <end position="166"/>
    </location>
</feature>
<organism>
    <name type="scientific">Marinomonas sp. (strain MWYL1)</name>
    <dbReference type="NCBI Taxonomy" id="400668"/>
    <lineage>
        <taxon>Bacteria</taxon>
        <taxon>Pseudomonadati</taxon>
        <taxon>Pseudomonadota</taxon>
        <taxon>Gammaproteobacteria</taxon>
        <taxon>Oceanospirillales</taxon>
        <taxon>Oceanospirillaceae</taxon>
        <taxon>Marinomonas</taxon>
    </lineage>
</organism>
<protein>
    <recommendedName>
        <fullName evidence="1">Large ribosomal subunit protein uL10</fullName>
    </recommendedName>
    <alternativeName>
        <fullName evidence="2">50S ribosomal protein L10</fullName>
    </alternativeName>
</protein>
<comment type="function">
    <text evidence="1">Forms part of the ribosomal stalk, playing a central role in the interaction of the ribosome with GTP-bound translation factors.</text>
</comment>
<comment type="subunit">
    <text evidence="1">Part of the ribosomal stalk of the 50S ribosomal subunit. The N-terminus interacts with L11 and the large rRNA to form the base of the stalk. The C-terminus forms an elongated spine to which L12 dimers bind in a sequential fashion forming a multimeric L10(L12)X complex.</text>
</comment>
<comment type="similarity">
    <text evidence="1">Belongs to the universal ribosomal protein uL10 family.</text>
</comment>
<gene>
    <name evidence="1" type="primary">rplJ</name>
    <name type="ordered locus">Mmwyl1_4285</name>
</gene>
<sequence>MALGLEDKKAIVAEVSEVAKTALSAVVADSRGVTVSSMTELRKEAREAGVYVRVVRNTLARRAVEGTDFECLAESFVGPTLIAFSNEHPGAAARLLKAFAKTNSKFEVKALAFNGELIPAGDIDRLATLPTYDEAIAKLMSVIQGATSKFVRTLAAVRDQKEQEAA</sequence>
<name>RL10_MARMS</name>
<reference key="1">
    <citation type="submission" date="2007-06" db="EMBL/GenBank/DDBJ databases">
        <title>Complete sequence of Marinomonas sp. MWYL1.</title>
        <authorList>
            <consortium name="US DOE Joint Genome Institute"/>
            <person name="Copeland A."/>
            <person name="Lucas S."/>
            <person name="Lapidus A."/>
            <person name="Barry K."/>
            <person name="Glavina del Rio T."/>
            <person name="Dalin E."/>
            <person name="Tice H."/>
            <person name="Pitluck S."/>
            <person name="Kiss H."/>
            <person name="Brettin T."/>
            <person name="Bruce D."/>
            <person name="Detter J.C."/>
            <person name="Han C."/>
            <person name="Schmutz J."/>
            <person name="Larimer F."/>
            <person name="Land M."/>
            <person name="Hauser L."/>
            <person name="Kyrpides N."/>
            <person name="Kim E."/>
            <person name="Johnston A.W.B."/>
            <person name="Todd J.D."/>
            <person name="Rogers R."/>
            <person name="Wexler M."/>
            <person name="Bond P.L."/>
            <person name="Li Y."/>
            <person name="Richardson P."/>
        </authorList>
    </citation>
    <scope>NUCLEOTIDE SEQUENCE [LARGE SCALE GENOMIC DNA]</scope>
    <source>
        <strain>MWYL1</strain>
    </source>
</reference>
<accession>A6W3A1</accession>
<proteinExistence type="inferred from homology"/>
<evidence type="ECO:0000255" key="1">
    <source>
        <dbReference type="HAMAP-Rule" id="MF_00362"/>
    </source>
</evidence>
<evidence type="ECO:0000305" key="2"/>